<protein>
    <recommendedName>
        <fullName evidence="1">UPF0225 protein PC1_1977</fullName>
    </recommendedName>
</protein>
<comment type="similarity">
    <text evidence="1">Belongs to the UPF0225 family.</text>
</comment>
<feature type="chain" id="PRO_1000212269" description="UPF0225 protein PC1_1977">
    <location>
        <begin position="1"/>
        <end position="155"/>
    </location>
</feature>
<organism>
    <name type="scientific">Pectobacterium carotovorum subsp. carotovorum (strain PC1)</name>
    <dbReference type="NCBI Taxonomy" id="561230"/>
    <lineage>
        <taxon>Bacteria</taxon>
        <taxon>Pseudomonadati</taxon>
        <taxon>Pseudomonadota</taxon>
        <taxon>Gammaproteobacteria</taxon>
        <taxon>Enterobacterales</taxon>
        <taxon>Pectobacteriaceae</taxon>
        <taxon>Pectobacterium</taxon>
    </lineage>
</organism>
<sequence>MSESCPCCSGLQYNACCQPYLTHAATAAEPAVLMRSRYTAYVKHDVDYLIATWHPDLQPEKWRASLAESCQNSQWLGLTILATSPGKTPDEGYVEFAARYISETDSQRTEVMRERSRFLRQHNRWYYIDGVHVQTGRNEPCPCDSGKKYKKCCGQ</sequence>
<dbReference type="EMBL" id="CP001657">
    <property type="protein sequence ID" value="ACT13018.1"/>
    <property type="molecule type" value="Genomic_DNA"/>
</dbReference>
<dbReference type="RefSeq" id="WP_015840211.1">
    <property type="nucleotide sequence ID" value="NC_012917.1"/>
</dbReference>
<dbReference type="SMR" id="C6DGW9"/>
<dbReference type="STRING" id="561230.PC1_1977"/>
<dbReference type="KEGG" id="pct:PC1_1977"/>
<dbReference type="eggNOG" id="COG3012">
    <property type="taxonomic scope" value="Bacteria"/>
</dbReference>
<dbReference type="HOGENOM" id="CLU_099590_0_0_6"/>
<dbReference type="OrthoDB" id="21421at2"/>
<dbReference type="Proteomes" id="UP000002736">
    <property type="component" value="Chromosome"/>
</dbReference>
<dbReference type="Gene3D" id="3.10.450.50">
    <property type="match status" value="1"/>
</dbReference>
<dbReference type="HAMAP" id="MF_00612">
    <property type="entry name" value="UPF0225"/>
    <property type="match status" value="1"/>
</dbReference>
<dbReference type="InterPro" id="IPR032710">
    <property type="entry name" value="NTF2-like_dom_sf"/>
</dbReference>
<dbReference type="InterPro" id="IPR004027">
    <property type="entry name" value="SEC_C_motif"/>
</dbReference>
<dbReference type="InterPro" id="IPR023006">
    <property type="entry name" value="UPF0225"/>
</dbReference>
<dbReference type="InterPro" id="IPR048469">
    <property type="entry name" value="YchJ-like_M"/>
</dbReference>
<dbReference type="NCBIfam" id="NF002449">
    <property type="entry name" value="PRK01617.1"/>
    <property type="match status" value="1"/>
</dbReference>
<dbReference type="NCBIfam" id="NF002486">
    <property type="entry name" value="PRK01752.1"/>
    <property type="match status" value="1"/>
</dbReference>
<dbReference type="PANTHER" id="PTHR33747:SF1">
    <property type="entry name" value="ADENYLATE CYCLASE-ASSOCIATED CAP C-TERMINAL DOMAIN-CONTAINING PROTEIN"/>
    <property type="match status" value="1"/>
</dbReference>
<dbReference type="PANTHER" id="PTHR33747">
    <property type="entry name" value="UPF0225 PROTEIN SCO1677"/>
    <property type="match status" value="1"/>
</dbReference>
<dbReference type="Pfam" id="PF02810">
    <property type="entry name" value="SEC-C"/>
    <property type="match status" value="1"/>
</dbReference>
<dbReference type="Pfam" id="PF17775">
    <property type="entry name" value="YchJ_M-like"/>
    <property type="match status" value="1"/>
</dbReference>
<dbReference type="SUPFAM" id="SSF54427">
    <property type="entry name" value="NTF2-like"/>
    <property type="match status" value="1"/>
</dbReference>
<dbReference type="SUPFAM" id="SSF103642">
    <property type="entry name" value="Sec-C motif"/>
    <property type="match status" value="1"/>
</dbReference>
<accession>C6DGW9</accession>
<reference key="1">
    <citation type="submission" date="2009-07" db="EMBL/GenBank/DDBJ databases">
        <title>Complete sequence of Pectobacterium carotovorum subsp. carotovorum PC1.</title>
        <authorList>
            <consortium name="US DOE Joint Genome Institute"/>
            <person name="Lucas S."/>
            <person name="Copeland A."/>
            <person name="Lapidus A."/>
            <person name="Glavina del Rio T."/>
            <person name="Tice H."/>
            <person name="Bruce D."/>
            <person name="Goodwin L."/>
            <person name="Pitluck S."/>
            <person name="Munk A.C."/>
            <person name="Brettin T."/>
            <person name="Detter J.C."/>
            <person name="Han C."/>
            <person name="Tapia R."/>
            <person name="Larimer F."/>
            <person name="Land M."/>
            <person name="Hauser L."/>
            <person name="Kyrpides N."/>
            <person name="Mikhailova N."/>
            <person name="Balakrishnan V."/>
            <person name="Glasner J."/>
            <person name="Perna N.T."/>
        </authorList>
    </citation>
    <scope>NUCLEOTIDE SEQUENCE [LARGE SCALE GENOMIC DNA]</scope>
    <source>
        <strain>PC1</strain>
    </source>
</reference>
<gene>
    <name type="ordered locus">PC1_1977</name>
</gene>
<proteinExistence type="inferred from homology"/>
<evidence type="ECO:0000255" key="1">
    <source>
        <dbReference type="HAMAP-Rule" id="MF_00612"/>
    </source>
</evidence>
<name>Y1977_PECCP</name>